<evidence type="ECO:0000250" key="1"/>
<evidence type="ECO:0000250" key="2">
    <source>
        <dbReference type="UniProtKB" id="Q13438"/>
    </source>
</evidence>
<evidence type="ECO:0000255" key="3"/>
<evidence type="ECO:0000255" key="4">
    <source>
        <dbReference type="PROSITE-ProRule" id="PRU01262"/>
    </source>
</evidence>
<evidence type="ECO:0000255" key="5">
    <source>
        <dbReference type="PROSITE-ProRule" id="PRU10138"/>
    </source>
</evidence>
<evidence type="ECO:0000256" key="6">
    <source>
        <dbReference type="SAM" id="MobiDB-lite"/>
    </source>
</evidence>
<evidence type="ECO:0000305" key="7"/>
<feature type="signal peptide" evidence="3">
    <location>
        <begin position="1"/>
        <end position="23"/>
    </location>
</feature>
<feature type="chain" id="PRO_0000043270" description="Protein OS-9 homolog">
    <location>
        <begin position="24"/>
        <end position="509"/>
    </location>
</feature>
<feature type="domain" description="MRH" evidence="4">
    <location>
        <begin position="151"/>
        <end position="291"/>
    </location>
</feature>
<feature type="region of interest" description="Disordered" evidence="6">
    <location>
        <begin position="64"/>
        <end position="91"/>
    </location>
</feature>
<feature type="region of interest" description="Disordered" evidence="6">
    <location>
        <begin position="433"/>
        <end position="509"/>
    </location>
</feature>
<feature type="short sequence motif" description="Prevents secretion from ER" evidence="5">
    <location>
        <begin position="506"/>
        <end position="509"/>
    </location>
</feature>
<feature type="compositionally biased region" description="Polar residues" evidence="6">
    <location>
        <begin position="64"/>
        <end position="74"/>
    </location>
</feature>
<feature type="compositionally biased region" description="Basic and acidic residues" evidence="6">
    <location>
        <begin position="75"/>
        <end position="91"/>
    </location>
</feature>
<feature type="compositionally biased region" description="Acidic residues" evidence="6">
    <location>
        <begin position="436"/>
        <end position="451"/>
    </location>
</feature>
<feature type="compositionally biased region" description="Basic and acidic residues" evidence="6">
    <location>
        <begin position="452"/>
        <end position="461"/>
    </location>
</feature>
<feature type="compositionally biased region" description="Acidic residues" evidence="6">
    <location>
        <begin position="489"/>
        <end position="502"/>
    </location>
</feature>
<feature type="binding site" evidence="2">
    <location>
        <position position="160"/>
    </location>
    <ligand>
        <name>a mannooligosaccharide derivative</name>
        <dbReference type="ChEBI" id="CHEBI:71274"/>
    </ligand>
</feature>
<feature type="binding site" evidence="2">
    <location>
        <position position="161"/>
    </location>
    <ligand>
        <name>a mannooligosaccharide derivative</name>
        <dbReference type="ChEBI" id="CHEBI:71274"/>
    </ligand>
</feature>
<feature type="binding site" evidence="2">
    <location>
        <position position="173"/>
    </location>
    <ligand>
        <name>a mannooligosaccharide derivative</name>
        <dbReference type="ChEBI" id="CHEBI:71274"/>
    </ligand>
</feature>
<feature type="binding site" evidence="2">
    <location>
        <position position="246"/>
    </location>
    <ligand>
        <name>a mannooligosaccharide derivative</name>
        <dbReference type="ChEBI" id="CHEBI:71274"/>
    </ligand>
</feature>
<feature type="binding site" evidence="2">
    <location>
        <position position="252"/>
    </location>
    <ligand>
        <name>a mannooligosaccharide derivative</name>
        <dbReference type="ChEBI" id="CHEBI:71274"/>
    </ligand>
</feature>
<feature type="binding site" evidence="2">
    <location>
        <position position="273"/>
    </location>
    <ligand>
        <name>a mannooligosaccharide derivative</name>
        <dbReference type="ChEBI" id="CHEBI:71274"/>
    </ligand>
</feature>
<feature type="binding site" evidence="2">
    <location>
        <position position="279"/>
    </location>
    <ligand>
        <name>a mannooligosaccharide derivative</name>
        <dbReference type="ChEBI" id="CHEBI:71274"/>
    </ligand>
</feature>
<feature type="glycosylation site" description="N-linked (GlcNAc...) asparagine" evidence="3">
    <location>
        <position position="120"/>
    </location>
</feature>
<feature type="disulfide bond" evidence="4">
    <location>
        <begin position="153"/>
        <end position="166"/>
    </location>
</feature>
<feature type="disulfide bond" evidence="4">
    <location>
        <begin position="245"/>
        <end position="277"/>
    </location>
</feature>
<feature type="disulfide bond" evidence="4">
    <location>
        <begin position="260"/>
        <end position="289"/>
    </location>
</feature>
<dbReference type="EMBL" id="AACD01000022">
    <property type="protein sequence ID" value="EAA64591.1"/>
    <property type="molecule type" value="Genomic_DNA"/>
</dbReference>
<dbReference type="EMBL" id="BN001307">
    <property type="protein sequence ID" value="CBF84906.1"/>
    <property type="molecule type" value="Genomic_DNA"/>
</dbReference>
<dbReference type="RefSeq" id="XP_659065.1">
    <property type="nucleotide sequence ID" value="XM_653973.1"/>
</dbReference>
<dbReference type="STRING" id="227321.Q5BDB9"/>
<dbReference type="GlyCosmos" id="Q5BDB9">
    <property type="glycosylation" value="1 site, No reported glycans"/>
</dbReference>
<dbReference type="EnsemblFungi" id="CBF84906">
    <property type="protein sequence ID" value="CBF84906"/>
    <property type="gene ID" value="ANIA_01461"/>
</dbReference>
<dbReference type="KEGG" id="ani:ANIA_01461"/>
<dbReference type="VEuPathDB" id="FungiDB:AN1461"/>
<dbReference type="eggNOG" id="KOG3394">
    <property type="taxonomic scope" value="Eukaryota"/>
</dbReference>
<dbReference type="HOGENOM" id="CLU_025069_0_0_1"/>
<dbReference type="InParanoid" id="Q5BDB9"/>
<dbReference type="OMA" id="AYPQFEV"/>
<dbReference type="OrthoDB" id="448954at2759"/>
<dbReference type="Proteomes" id="UP000000560">
    <property type="component" value="Chromosome VII"/>
</dbReference>
<dbReference type="GO" id="GO:0005788">
    <property type="term" value="C:endoplasmic reticulum lumen"/>
    <property type="evidence" value="ECO:0000318"/>
    <property type="project" value="GO_Central"/>
</dbReference>
<dbReference type="GO" id="GO:0005789">
    <property type="term" value="C:endoplasmic reticulum membrane"/>
    <property type="evidence" value="ECO:0007669"/>
    <property type="project" value="UniProtKB-SubCell"/>
</dbReference>
<dbReference type="GO" id="GO:0030246">
    <property type="term" value="F:carbohydrate binding"/>
    <property type="evidence" value="ECO:0007669"/>
    <property type="project" value="UniProtKB-KW"/>
</dbReference>
<dbReference type="GO" id="GO:0030968">
    <property type="term" value="P:endoplasmic reticulum unfolded protein response"/>
    <property type="evidence" value="ECO:0007669"/>
    <property type="project" value="InterPro"/>
</dbReference>
<dbReference type="GO" id="GO:0030970">
    <property type="term" value="P:retrograde protein transport, ER to cytosol"/>
    <property type="evidence" value="ECO:0000318"/>
    <property type="project" value="GO_Central"/>
</dbReference>
<dbReference type="FunFam" id="2.70.130.10:FF:000025">
    <property type="entry name" value="Protein OS-9 homolog"/>
    <property type="match status" value="1"/>
</dbReference>
<dbReference type="Gene3D" id="2.70.130.10">
    <property type="entry name" value="Mannose-6-phosphate receptor binding domain"/>
    <property type="match status" value="1"/>
</dbReference>
<dbReference type="InterPro" id="IPR009011">
    <property type="entry name" value="Man6P_isomerase_rcpt-bd_dom_sf"/>
</dbReference>
<dbReference type="InterPro" id="IPR044865">
    <property type="entry name" value="MRH_dom"/>
</dbReference>
<dbReference type="InterPro" id="IPR045149">
    <property type="entry name" value="OS-9-like"/>
</dbReference>
<dbReference type="InterPro" id="IPR012913">
    <property type="entry name" value="OS9-like_dom"/>
</dbReference>
<dbReference type="PANTHER" id="PTHR15414:SF0">
    <property type="entry name" value="ENDOPLASMIC RETICULUM LECTIN 1"/>
    <property type="match status" value="1"/>
</dbReference>
<dbReference type="PANTHER" id="PTHR15414">
    <property type="entry name" value="OS-9-RELATED"/>
    <property type="match status" value="1"/>
</dbReference>
<dbReference type="Pfam" id="PF07915">
    <property type="entry name" value="PRKCSH"/>
    <property type="match status" value="1"/>
</dbReference>
<dbReference type="SUPFAM" id="SSF50911">
    <property type="entry name" value="Mannose 6-phosphate receptor domain"/>
    <property type="match status" value="1"/>
</dbReference>
<dbReference type="PROSITE" id="PS00014">
    <property type="entry name" value="ER_TARGET"/>
    <property type="match status" value="1"/>
</dbReference>
<dbReference type="PROSITE" id="PS51914">
    <property type="entry name" value="MRH"/>
    <property type="match status" value="1"/>
</dbReference>
<comment type="function">
    <text evidence="1">Lectin involved in the quality control of the secretory pathway. As a member of the endoplasmic reticulum-associated degradation lumenal (ERAD-L) surveillance system, targets misfolded endoplasmic reticulum lumenal glycoproteins for degradation (By similarity).</text>
</comment>
<comment type="subunit">
    <text evidence="1">Interacts with missfolded ER lumenal proteins.</text>
</comment>
<comment type="subcellular location">
    <subcellularLocation>
        <location evidence="5">Endoplasmic reticulum membrane</location>
        <topology evidence="1">Peripheral membrane protein</topology>
        <orientation evidence="1">Lumenal side</orientation>
    </subcellularLocation>
</comment>
<comment type="similarity">
    <text evidence="7">Belongs to the OS-9 family.</text>
</comment>
<name>OS9_EMENI</name>
<organism>
    <name type="scientific">Emericella nidulans (strain FGSC A4 / ATCC 38163 / CBS 112.46 / NRRL 194 / M139)</name>
    <name type="common">Aspergillus nidulans</name>
    <dbReference type="NCBI Taxonomy" id="227321"/>
    <lineage>
        <taxon>Eukaryota</taxon>
        <taxon>Fungi</taxon>
        <taxon>Dikarya</taxon>
        <taxon>Ascomycota</taxon>
        <taxon>Pezizomycotina</taxon>
        <taxon>Eurotiomycetes</taxon>
        <taxon>Eurotiomycetidae</taxon>
        <taxon>Eurotiales</taxon>
        <taxon>Aspergillaceae</taxon>
        <taxon>Aspergillus</taxon>
        <taxon>Aspergillus subgen. Nidulantes</taxon>
    </lineage>
</organism>
<gene>
    <name type="primary">yos9</name>
    <name type="ORF">AN1461</name>
</gene>
<sequence length="509" mass="57548">MRRQSRIVASLLVLACASSGAFAHRKFNVHDDLLAYPQFRIKFPDGFILESQARAFLEQAPYSSPDLNDISEQTPLKDESEESIRDGSSGEKAKFSYEELSLEGQRYLCQIPVVEDGDSNRTKVEVNEEEERKELARATDRGLELLREMEGKCLYYISGWWSYSFCYMNQIKQFHALPSGGGVPNYPPMEDHTTHSFILGRFPQEEGQDEGKGAKSGKSSTELAELQTKGGSRYLVQRLESGDQCDLTGKNRKIEVQFHCNPQSTDRIAWIKELYTCSYLMLIYTPRLCNDVAFLPPQQEEVHTIECREILTPEEVTGWQAMHEYQLSQQLVESAEAPKHQVIGGIEVGAQRLVGTEGKRIEKGRVASIGEEKVDVVAKRVNGEVQLLSAEELKKFDLDEAKIEELRKKLEEWAKGKDWTLEIVTGNGAYLRGVVDTDEDEEDGYENEEGETDKREQRENTQETTGQPGQPGHQEETESGQAGHPMDDRSEDGEDPDVDGSEEIFKDEL</sequence>
<proteinExistence type="inferred from homology"/>
<keyword id="KW-1015">Disulfide bond</keyword>
<keyword id="KW-0256">Endoplasmic reticulum</keyword>
<keyword id="KW-0325">Glycoprotein</keyword>
<keyword id="KW-0430">Lectin</keyword>
<keyword id="KW-0472">Membrane</keyword>
<keyword id="KW-1185">Reference proteome</keyword>
<keyword id="KW-0732">Signal</keyword>
<protein>
    <recommendedName>
        <fullName>Protein OS-9 homolog</fullName>
    </recommendedName>
</protein>
<accession>Q5BDB9</accession>
<accession>C8VMD1</accession>
<reference key="1">
    <citation type="journal article" date="2005" name="Nature">
        <title>Sequencing of Aspergillus nidulans and comparative analysis with A. fumigatus and A. oryzae.</title>
        <authorList>
            <person name="Galagan J.E."/>
            <person name="Calvo S.E."/>
            <person name="Cuomo C."/>
            <person name="Ma L.-J."/>
            <person name="Wortman J.R."/>
            <person name="Batzoglou S."/>
            <person name="Lee S.-I."/>
            <person name="Bastuerkmen M."/>
            <person name="Spevak C.C."/>
            <person name="Clutterbuck J."/>
            <person name="Kapitonov V."/>
            <person name="Jurka J."/>
            <person name="Scazzocchio C."/>
            <person name="Farman M.L."/>
            <person name="Butler J."/>
            <person name="Purcell S."/>
            <person name="Harris S."/>
            <person name="Braus G.H."/>
            <person name="Draht O."/>
            <person name="Busch S."/>
            <person name="D'Enfert C."/>
            <person name="Bouchier C."/>
            <person name="Goldman G.H."/>
            <person name="Bell-Pedersen D."/>
            <person name="Griffiths-Jones S."/>
            <person name="Doonan J.H."/>
            <person name="Yu J."/>
            <person name="Vienken K."/>
            <person name="Pain A."/>
            <person name="Freitag M."/>
            <person name="Selker E.U."/>
            <person name="Archer D.B."/>
            <person name="Penalva M.A."/>
            <person name="Oakley B.R."/>
            <person name="Momany M."/>
            <person name="Tanaka T."/>
            <person name="Kumagai T."/>
            <person name="Asai K."/>
            <person name="Machida M."/>
            <person name="Nierman W.C."/>
            <person name="Denning D.W."/>
            <person name="Caddick M.X."/>
            <person name="Hynes M."/>
            <person name="Paoletti M."/>
            <person name="Fischer R."/>
            <person name="Miller B.L."/>
            <person name="Dyer P.S."/>
            <person name="Sachs M.S."/>
            <person name="Osmani S.A."/>
            <person name="Birren B.W."/>
        </authorList>
    </citation>
    <scope>NUCLEOTIDE SEQUENCE [LARGE SCALE GENOMIC DNA]</scope>
    <source>
        <strain>FGSC A4 / ATCC 38163 / CBS 112.46 / NRRL 194 / M139</strain>
    </source>
</reference>
<reference key="2">
    <citation type="journal article" date="2009" name="Fungal Genet. Biol.">
        <title>The 2008 update of the Aspergillus nidulans genome annotation: a community effort.</title>
        <authorList>
            <person name="Wortman J.R."/>
            <person name="Gilsenan J.M."/>
            <person name="Joardar V."/>
            <person name="Deegan J."/>
            <person name="Clutterbuck J."/>
            <person name="Andersen M.R."/>
            <person name="Archer D."/>
            <person name="Bencina M."/>
            <person name="Braus G."/>
            <person name="Coutinho P."/>
            <person name="von Dohren H."/>
            <person name="Doonan J."/>
            <person name="Driessen A.J."/>
            <person name="Durek P."/>
            <person name="Espeso E."/>
            <person name="Fekete E."/>
            <person name="Flipphi M."/>
            <person name="Estrada C.G."/>
            <person name="Geysens S."/>
            <person name="Goldman G."/>
            <person name="de Groot P.W."/>
            <person name="Hansen K."/>
            <person name="Harris S.D."/>
            <person name="Heinekamp T."/>
            <person name="Helmstaedt K."/>
            <person name="Henrissat B."/>
            <person name="Hofmann G."/>
            <person name="Homan T."/>
            <person name="Horio T."/>
            <person name="Horiuchi H."/>
            <person name="James S."/>
            <person name="Jones M."/>
            <person name="Karaffa L."/>
            <person name="Karanyi Z."/>
            <person name="Kato M."/>
            <person name="Keller N."/>
            <person name="Kelly D.E."/>
            <person name="Kiel J.A."/>
            <person name="Kim J.M."/>
            <person name="van der Klei I.J."/>
            <person name="Klis F.M."/>
            <person name="Kovalchuk A."/>
            <person name="Krasevec N."/>
            <person name="Kubicek C.P."/>
            <person name="Liu B."/>
            <person name="Maccabe A."/>
            <person name="Meyer V."/>
            <person name="Mirabito P."/>
            <person name="Miskei M."/>
            <person name="Mos M."/>
            <person name="Mullins J."/>
            <person name="Nelson D.R."/>
            <person name="Nielsen J."/>
            <person name="Oakley B.R."/>
            <person name="Osmani S.A."/>
            <person name="Pakula T."/>
            <person name="Paszewski A."/>
            <person name="Paulsen I."/>
            <person name="Pilsyk S."/>
            <person name="Pocsi I."/>
            <person name="Punt P.J."/>
            <person name="Ram A.F."/>
            <person name="Ren Q."/>
            <person name="Robellet X."/>
            <person name="Robson G."/>
            <person name="Seiboth B."/>
            <person name="van Solingen P."/>
            <person name="Specht T."/>
            <person name="Sun J."/>
            <person name="Taheri-Talesh N."/>
            <person name="Takeshita N."/>
            <person name="Ussery D."/>
            <person name="vanKuyk P.A."/>
            <person name="Visser H."/>
            <person name="van de Vondervoort P.J."/>
            <person name="de Vries R.P."/>
            <person name="Walton J."/>
            <person name="Xiang X."/>
            <person name="Xiong Y."/>
            <person name="Zeng A.P."/>
            <person name="Brandt B.W."/>
            <person name="Cornell M.J."/>
            <person name="van den Hondel C.A."/>
            <person name="Visser J."/>
            <person name="Oliver S.G."/>
            <person name="Turner G."/>
        </authorList>
    </citation>
    <scope>GENOME REANNOTATION</scope>
    <source>
        <strain>FGSC A4 / ATCC 38163 / CBS 112.46 / NRRL 194 / M139</strain>
    </source>
</reference>